<dbReference type="EC" id="6.1.1.15" evidence="1"/>
<dbReference type="EMBL" id="CP000447">
    <property type="protein sequence ID" value="ABI72593.1"/>
    <property type="molecule type" value="Genomic_DNA"/>
</dbReference>
<dbReference type="RefSeq" id="WP_011638202.1">
    <property type="nucleotide sequence ID" value="NC_008345.1"/>
</dbReference>
<dbReference type="SMR" id="Q07ZH1"/>
<dbReference type="STRING" id="318167.Sfri_2753"/>
<dbReference type="KEGG" id="sfr:Sfri_2753"/>
<dbReference type="eggNOG" id="COG0442">
    <property type="taxonomic scope" value="Bacteria"/>
</dbReference>
<dbReference type="HOGENOM" id="CLU_016739_0_0_6"/>
<dbReference type="OrthoDB" id="9809052at2"/>
<dbReference type="Proteomes" id="UP000000684">
    <property type="component" value="Chromosome"/>
</dbReference>
<dbReference type="GO" id="GO:0005829">
    <property type="term" value="C:cytosol"/>
    <property type="evidence" value="ECO:0007669"/>
    <property type="project" value="TreeGrafter"/>
</dbReference>
<dbReference type="GO" id="GO:0002161">
    <property type="term" value="F:aminoacyl-tRNA deacylase activity"/>
    <property type="evidence" value="ECO:0007669"/>
    <property type="project" value="InterPro"/>
</dbReference>
<dbReference type="GO" id="GO:0005524">
    <property type="term" value="F:ATP binding"/>
    <property type="evidence" value="ECO:0007669"/>
    <property type="project" value="UniProtKB-UniRule"/>
</dbReference>
<dbReference type="GO" id="GO:0004827">
    <property type="term" value="F:proline-tRNA ligase activity"/>
    <property type="evidence" value="ECO:0007669"/>
    <property type="project" value="UniProtKB-UniRule"/>
</dbReference>
<dbReference type="GO" id="GO:0006433">
    <property type="term" value="P:prolyl-tRNA aminoacylation"/>
    <property type="evidence" value="ECO:0007669"/>
    <property type="project" value="UniProtKB-UniRule"/>
</dbReference>
<dbReference type="CDD" id="cd04334">
    <property type="entry name" value="ProRS-INS"/>
    <property type="match status" value="1"/>
</dbReference>
<dbReference type="CDD" id="cd00861">
    <property type="entry name" value="ProRS_anticodon_short"/>
    <property type="match status" value="1"/>
</dbReference>
<dbReference type="CDD" id="cd00779">
    <property type="entry name" value="ProRS_core_prok"/>
    <property type="match status" value="1"/>
</dbReference>
<dbReference type="FunFam" id="3.30.930.10:FF:000043">
    <property type="entry name" value="Proline--tRNA ligase"/>
    <property type="match status" value="1"/>
</dbReference>
<dbReference type="FunFam" id="3.30.930.10:FF:000062">
    <property type="entry name" value="Proline--tRNA ligase"/>
    <property type="match status" value="1"/>
</dbReference>
<dbReference type="FunFam" id="3.40.50.800:FF:000006">
    <property type="entry name" value="Proline--tRNA ligase"/>
    <property type="match status" value="1"/>
</dbReference>
<dbReference type="FunFam" id="3.90.960.10:FF:000001">
    <property type="entry name" value="Proline--tRNA ligase"/>
    <property type="match status" value="1"/>
</dbReference>
<dbReference type="Gene3D" id="3.40.50.800">
    <property type="entry name" value="Anticodon-binding domain"/>
    <property type="match status" value="1"/>
</dbReference>
<dbReference type="Gene3D" id="3.30.930.10">
    <property type="entry name" value="Bira Bifunctional Protein, Domain 2"/>
    <property type="match status" value="2"/>
</dbReference>
<dbReference type="Gene3D" id="3.90.960.10">
    <property type="entry name" value="YbaK/aminoacyl-tRNA synthetase-associated domain"/>
    <property type="match status" value="1"/>
</dbReference>
<dbReference type="HAMAP" id="MF_01569">
    <property type="entry name" value="Pro_tRNA_synth_type1"/>
    <property type="match status" value="1"/>
</dbReference>
<dbReference type="InterPro" id="IPR002314">
    <property type="entry name" value="aa-tRNA-synt_IIb"/>
</dbReference>
<dbReference type="InterPro" id="IPR006195">
    <property type="entry name" value="aa-tRNA-synth_II"/>
</dbReference>
<dbReference type="InterPro" id="IPR045864">
    <property type="entry name" value="aa-tRNA-synth_II/BPL/LPL"/>
</dbReference>
<dbReference type="InterPro" id="IPR004154">
    <property type="entry name" value="Anticodon-bd"/>
</dbReference>
<dbReference type="InterPro" id="IPR036621">
    <property type="entry name" value="Anticodon-bd_dom_sf"/>
</dbReference>
<dbReference type="InterPro" id="IPR002316">
    <property type="entry name" value="Pro-tRNA-ligase_IIa"/>
</dbReference>
<dbReference type="InterPro" id="IPR004500">
    <property type="entry name" value="Pro-tRNA-synth_IIa_bac-type"/>
</dbReference>
<dbReference type="InterPro" id="IPR023717">
    <property type="entry name" value="Pro-tRNA-Synthase_IIa_type1"/>
</dbReference>
<dbReference type="InterPro" id="IPR050062">
    <property type="entry name" value="Pro-tRNA_synthetase"/>
</dbReference>
<dbReference type="InterPro" id="IPR044140">
    <property type="entry name" value="ProRS_anticodon_short"/>
</dbReference>
<dbReference type="InterPro" id="IPR033730">
    <property type="entry name" value="ProRS_core_prok"/>
</dbReference>
<dbReference type="InterPro" id="IPR036754">
    <property type="entry name" value="YbaK/aa-tRNA-synt-asso_dom_sf"/>
</dbReference>
<dbReference type="InterPro" id="IPR007214">
    <property type="entry name" value="YbaK/aa-tRNA-synth-assoc-dom"/>
</dbReference>
<dbReference type="NCBIfam" id="NF006625">
    <property type="entry name" value="PRK09194.1"/>
    <property type="match status" value="1"/>
</dbReference>
<dbReference type="NCBIfam" id="TIGR00409">
    <property type="entry name" value="proS_fam_II"/>
    <property type="match status" value="1"/>
</dbReference>
<dbReference type="PANTHER" id="PTHR42753">
    <property type="entry name" value="MITOCHONDRIAL RIBOSOME PROTEIN L39/PROLYL-TRNA LIGASE FAMILY MEMBER"/>
    <property type="match status" value="1"/>
</dbReference>
<dbReference type="PANTHER" id="PTHR42753:SF2">
    <property type="entry name" value="PROLINE--TRNA LIGASE"/>
    <property type="match status" value="1"/>
</dbReference>
<dbReference type="Pfam" id="PF03129">
    <property type="entry name" value="HGTP_anticodon"/>
    <property type="match status" value="1"/>
</dbReference>
<dbReference type="Pfam" id="PF00587">
    <property type="entry name" value="tRNA-synt_2b"/>
    <property type="match status" value="1"/>
</dbReference>
<dbReference type="Pfam" id="PF04073">
    <property type="entry name" value="tRNA_edit"/>
    <property type="match status" value="1"/>
</dbReference>
<dbReference type="PIRSF" id="PIRSF001535">
    <property type="entry name" value="ProRS_1"/>
    <property type="match status" value="1"/>
</dbReference>
<dbReference type="PRINTS" id="PR01046">
    <property type="entry name" value="TRNASYNTHPRO"/>
</dbReference>
<dbReference type="SUPFAM" id="SSF52954">
    <property type="entry name" value="Class II aaRS ABD-related"/>
    <property type="match status" value="1"/>
</dbReference>
<dbReference type="SUPFAM" id="SSF55681">
    <property type="entry name" value="Class II aaRS and biotin synthetases"/>
    <property type="match status" value="1"/>
</dbReference>
<dbReference type="SUPFAM" id="SSF55826">
    <property type="entry name" value="YbaK/ProRS associated domain"/>
    <property type="match status" value="1"/>
</dbReference>
<dbReference type="PROSITE" id="PS50862">
    <property type="entry name" value="AA_TRNA_LIGASE_II"/>
    <property type="match status" value="1"/>
</dbReference>
<comment type="function">
    <text evidence="1">Catalyzes the attachment of proline to tRNA(Pro) in a two-step reaction: proline is first activated by ATP to form Pro-AMP and then transferred to the acceptor end of tRNA(Pro). As ProRS can inadvertently accommodate and process non-cognate amino acids such as alanine and cysteine, to avoid such errors it has two additional distinct editing activities against alanine. One activity is designated as 'pretransfer' editing and involves the tRNA(Pro)-independent hydrolysis of activated Ala-AMP. The other activity is designated 'posttransfer' editing and involves deacylation of mischarged Ala-tRNA(Pro). The misacylated Cys-tRNA(Pro) is not edited by ProRS.</text>
</comment>
<comment type="catalytic activity">
    <reaction evidence="1">
        <text>tRNA(Pro) + L-proline + ATP = L-prolyl-tRNA(Pro) + AMP + diphosphate</text>
        <dbReference type="Rhea" id="RHEA:14305"/>
        <dbReference type="Rhea" id="RHEA-COMP:9700"/>
        <dbReference type="Rhea" id="RHEA-COMP:9702"/>
        <dbReference type="ChEBI" id="CHEBI:30616"/>
        <dbReference type="ChEBI" id="CHEBI:33019"/>
        <dbReference type="ChEBI" id="CHEBI:60039"/>
        <dbReference type="ChEBI" id="CHEBI:78442"/>
        <dbReference type="ChEBI" id="CHEBI:78532"/>
        <dbReference type="ChEBI" id="CHEBI:456215"/>
        <dbReference type="EC" id="6.1.1.15"/>
    </reaction>
</comment>
<comment type="subunit">
    <text evidence="1">Homodimer.</text>
</comment>
<comment type="subcellular location">
    <subcellularLocation>
        <location evidence="1">Cytoplasm</location>
    </subcellularLocation>
</comment>
<comment type="domain">
    <text evidence="1">Consists of three domains: the N-terminal catalytic domain, the editing domain and the C-terminal anticodon-binding domain.</text>
</comment>
<comment type="similarity">
    <text evidence="1">Belongs to the class-II aminoacyl-tRNA synthetase family. ProS type 1 subfamily.</text>
</comment>
<name>SYP_SHEFN</name>
<organism>
    <name type="scientific">Shewanella frigidimarina (strain NCIMB 400)</name>
    <dbReference type="NCBI Taxonomy" id="318167"/>
    <lineage>
        <taxon>Bacteria</taxon>
        <taxon>Pseudomonadati</taxon>
        <taxon>Pseudomonadota</taxon>
        <taxon>Gammaproteobacteria</taxon>
        <taxon>Alteromonadales</taxon>
        <taxon>Shewanellaceae</taxon>
        <taxon>Shewanella</taxon>
    </lineage>
</organism>
<gene>
    <name evidence="1" type="primary">proS</name>
    <name type="ordered locus">Sfri_2753</name>
</gene>
<reference key="1">
    <citation type="submission" date="2006-08" db="EMBL/GenBank/DDBJ databases">
        <title>Complete sequence of Shewanella frigidimarina NCIMB 400.</title>
        <authorList>
            <consortium name="US DOE Joint Genome Institute"/>
            <person name="Copeland A."/>
            <person name="Lucas S."/>
            <person name="Lapidus A."/>
            <person name="Barry K."/>
            <person name="Detter J.C."/>
            <person name="Glavina del Rio T."/>
            <person name="Hammon N."/>
            <person name="Israni S."/>
            <person name="Dalin E."/>
            <person name="Tice H."/>
            <person name="Pitluck S."/>
            <person name="Fredrickson J.K."/>
            <person name="Kolker E."/>
            <person name="McCuel L.A."/>
            <person name="DiChristina T."/>
            <person name="Nealson K.H."/>
            <person name="Newman D."/>
            <person name="Tiedje J.M."/>
            <person name="Zhou J."/>
            <person name="Romine M.F."/>
            <person name="Culley D.E."/>
            <person name="Serres M."/>
            <person name="Chertkov O."/>
            <person name="Brettin T."/>
            <person name="Bruce D."/>
            <person name="Han C."/>
            <person name="Tapia R."/>
            <person name="Gilna P."/>
            <person name="Schmutz J."/>
            <person name="Larimer F."/>
            <person name="Land M."/>
            <person name="Hauser L."/>
            <person name="Kyrpides N."/>
            <person name="Mikhailova N."/>
            <person name="Richardson P."/>
        </authorList>
    </citation>
    <scope>NUCLEOTIDE SEQUENCE [LARGE SCALE GENOMIC DNA]</scope>
    <source>
        <strain>NCIMB 400</strain>
    </source>
</reference>
<protein>
    <recommendedName>
        <fullName evidence="1">Proline--tRNA ligase</fullName>
        <ecNumber evidence="1">6.1.1.15</ecNumber>
    </recommendedName>
    <alternativeName>
        <fullName evidence="1">Prolyl-tRNA synthetase</fullName>
        <shortName evidence="1">ProRS</shortName>
    </alternativeName>
</protein>
<sequence>MRVSKYLLSTQKETPANAEVISHQLMLRAGMIRRNASGLYTWLPSGLRVLRKVEAIVREEMNKTGAIEILMPLVQPADLWVETGRWDKFGPELLRFQDRNNRDFVLGPTHEEVITDLVRKELSSYKQLPLTLYQVQTKFRDEVRPRFGVMRAREFLMKDAYSFHLDQETMDNTYHAMHTAYSNILTRMGLSFRPVLADTGSIGGSMSHEFHVLANSGEDLIAYSTGSDYAANIEKAESPMPTHTLAAPTEAMTLVDTPNAKTIAELVEQFNVVITKTVKTLIVKGATDEVPLVALVIRGDHELNEIKADKLELVASPFEFASETEIRAAVGAGPGSIGPVGLTMPIIVDHSVTVMSDFAAGANAEDKHYFGINWDRDLPLATAADIRNVVEGEPTPDGLGTYAMARGIEVGHIFQLGTSYSKSMNATVLDENGKAQVLLMGCYGVGVSRIVAAAIEQNNDDRGITWPEAIAPFTVGILPMNMHKSHRVADIAEKLYQDLADAGVEVLMDDRKERPGVMFADMELIGLPHVVVIGDRNIDAGVFEYKNRRTGEKQDIPFDEIVAFLTNAAKG</sequence>
<evidence type="ECO:0000255" key="1">
    <source>
        <dbReference type="HAMAP-Rule" id="MF_01569"/>
    </source>
</evidence>
<accession>Q07ZH1</accession>
<proteinExistence type="inferred from homology"/>
<keyword id="KW-0030">Aminoacyl-tRNA synthetase</keyword>
<keyword id="KW-0067">ATP-binding</keyword>
<keyword id="KW-0963">Cytoplasm</keyword>
<keyword id="KW-0436">Ligase</keyword>
<keyword id="KW-0547">Nucleotide-binding</keyword>
<keyword id="KW-0648">Protein biosynthesis</keyword>
<keyword id="KW-1185">Reference proteome</keyword>
<feature type="chain" id="PRO_0000288375" description="Proline--tRNA ligase">
    <location>
        <begin position="1"/>
        <end position="571"/>
    </location>
</feature>